<keyword id="KW-0224">Dipeptidase</keyword>
<keyword id="KW-0378">Hydrolase</keyword>
<keyword id="KW-0464">Manganese</keyword>
<keyword id="KW-0479">Metal-binding</keyword>
<keyword id="KW-0482">Metalloprotease</keyword>
<keyword id="KW-0645">Protease</keyword>
<feature type="chain" id="PRO_0000303881" description="Xaa-Pro dipeptidase">
    <location>
        <begin position="1"/>
        <end position="443"/>
    </location>
</feature>
<feature type="binding site" evidence="1">
    <location>
        <position position="246"/>
    </location>
    <ligand>
        <name>Mn(2+)</name>
        <dbReference type="ChEBI" id="CHEBI:29035"/>
        <label>2</label>
    </ligand>
</feature>
<feature type="binding site" evidence="1">
    <location>
        <position position="257"/>
    </location>
    <ligand>
        <name>Mn(2+)</name>
        <dbReference type="ChEBI" id="CHEBI:29035"/>
        <label>1</label>
    </ligand>
</feature>
<feature type="binding site" evidence="1">
    <location>
        <position position="257"/>
    </location>
    <ligand>
        <name>Mn(2+)</name>
        <dbReference type="ChEBI" id="CHEBI:29035"/>
        <label>2</label>
    </ligand>
</feature>
<feature type="binding site" evidence="1">
    <location>
        <position position="339"/>
    </location>
    <ligand>
        <name>Mn(2+)</name>
        <dbReference type="ChEBI" id="CHEBI:29035"/>
        <label>1</label>
    </ligand>
</feature>
<feature type="binding site" evidence="1">
    <location>
        <position position="384"/>
    </location>
    <ligand>
        <name>Mn(2+)</name>
        <dbReference type="ChEBI" id="CHEBI:29035"/>
        <label>1</label>
    </ligand>
</feature>
<feature type="binding site" evidence="1">
    <location>
        <position position="423"/>
    </location>
    <ligand>
        <name>Mn(2+)</name>
        <dbReference type="ChEBI" id="CHEBI:29035"/>
        <label>1</label>
    </ligand>
</feature>
<feature type="binding site" evidence="1">
    <location>
        <position position="423"/>
    </location>
    <ligand>
        <name>Mn(2+)</name>
        <dbReference type="ChEBI" id="CHEBI:29035"/>
        <label>2</label>
    </ligand>
</feature>
<comment type="function">
    <text evidence="1">Splits dipeptides with a prolyl residue in the C-terminal position.</text>
</comment>
<comment type="catalytic activity">
    <reaction evidence="1">
        <text>Xaa-L-Pro dipeptide + H2O = an L-alpha-amino acid + L-proline</text>
        <dbReference type="Rhea" id="RHEA:76407"/>
        <dbReference type="ChEBI" id="CHEBI:15377"/>
        <dbReference type="ChEBI" id="CHEBI:59869"/>
        <dbReference type="ChEBI" id="CHEBI:60039"/>
        <dbReference type="ChEBI" id="CHEBI:195196"/>
        <dbReference type="EC" id="3.4.13.9"/>
    </reaction>
</comment>
<comment type="cofactor">
    <cofactor evidence="1">
        <name>Mn(2+)</name>
        <dbReference type="ChEBI" id="CHEBI:29035"/>
    </cofactor>
    <text evidence="1">Binds 2 manganese ions per subunit.</text>
</comment>
<comment type="similarity">
    <text evidence="1">Belongs to the peptidase M24B family. Bacterial-type prolidase subfamily.</text>
</comment>
<reference key="1">
    <citation type="journal article" date="2006" name="J. Bacteriol.">
        <title>Complete genome sequence of Yersinia pestis strains Antiqua and Nepal516: evidence of gene reduction in an emerging pathogen.</title>
        <authorList>
            <person name="Chain P.S.G."/>
            <person name="Hu P."/>
            <person name="Malfatti S.A."/>
            <person name="Radnedge L."/>
            <person name="Larimer F."/>
            <person name="Vergez L.M."/>
            <person name="Worsham P."/>
            <person name="Chu M.C."/>
            <person name="Andersen G.L."/>
        </authorList>
    </citation>
    <scope>NUCLEOTIDE SEQUENCE [LARGE SCALE GENOMIC DNA]</scope>
    <source>
        <strain>Nepal516</strain>
    </source>
</reference>
<reference key="2">
    <citation type="submission" date="2009-04" db="EMBL/GenBank/DDBJ databases">
        <title>Yersinia pestis Nepal516A whole genome shotgun sequencing project.</title>
        <authorList>
            <person name="Plunkett G. III"/>
            <person name="Anderson B.D."/>
            <person name="Baumler D.J."/>
            <person name="Burland V."/>
            <person name="Cabot E.L."/>
            <person name="Glasner J.D."/>
            <person name="Mau B."/>
            <person name="Neeno-Eckwall E."/>
            <person name="Perna N.T."/>
            <person name="Munk A.C."/>
            <person name="Tapia R."/>
            <person name="Green L.D."/>
            <person name="Rogers Y.C."/>
            <person name="Detter J.C."/>
            <person name="Bruce D.C."/>
            <person name="Brettin T.S."/>
        </authorList>
    </citation>
    <scope>NUCLEOTIDE SEQUENCE [LARGE SCALE GENOMIC DNA]</scope>
    <source>
        <strain>Nepal516</strain>
    </source>
</reference>
<dbReference type="EC" id="3.4.13.9" evidence="1"/>
<dbReference type="EMBL" id="CP000305">
    <property type="protein sequence ID" value="ABG16532.1"/>
    <property type="molecule type" value="Genomic_DNA"/>
</dbReference>
<dbReference type="EMBL" id="ACNQ01000001">
    <property type="protein sequence ID" value="EEO78646.1"/>
    <property type="molecule type" value="Genomic_DNA"/>
</dbReference>
<dbReference type="PIR" id="AE0458">
    <property type="entry name" value="AE0458"/>
</dbReference>
<dbReference type="RefSeq" id="WP_002211547.1">
    <property type="nucleotide sequence ID" value="NZ_ACNQ01000001.1"/>
</dbReference>
<dbReference type="SMR" id="Q1CN98"/>
<dbReference type="MEROPS" id="M24.003"/>
<dbReference type="GeneID" id="57974943"/>
<dbReference type="KEGG" id="ypn:YPN_0199"/>
<dbReference type="HOGENOM" id="CLU_050675_0_0_6"/>
<dbReference type="Proteomes" id="UP000008936">
    <property type="component" value="Chromosome"/>
</dbReference>
<dbReference type="GO" id="GO:0005829">
    <property type="term" value="C:cytosol"/>
    <property type="evidence" value="ECO:0007669"/>
    <property type="project" value="TreeGrafter"/>
</dbReference>
<dbReference type="GO" id="GO:0004177">
    <property type="term" value="F:aminopeptidase activity"/>
    <property type="evidence" value="ECO:0007669"/>
    <property type="project" value="TreeGrafter"/>
</dbReference>
<dbReference type="GO" id="GO:0046872">
    <property type="term" value="F:metal ion binding"/>
    <property type="evidence" value="ECO:0007669"/>
    <property type="project" value="UniProtKB-KW"/>
</dbReference>
<dbReference type="GO" id="GO:0008235">
    <property type="term" value="F:metalloexopeptidase activity"/>
    <property type="evidence" value="ECO:0007669"/>
    <property type="project" value="UniProtKB-UniRule"/>
</dbReference>
<dbReference type="GO" id="GO:0016795">
    <property type="term" value="F:phosphoric triester hydrolase activity"/>
    <property type="evidence" value="ECO:0007669"/>
    <property type="project" value="InterPro"/>
</dbReference>
<dbReference type="GO" id="GO:0102009">
    <property type="term" value="F:proline dipeptidase activity"/>
    <property type="evidence" value="ECO:0007669"/>
    <property type="project" value="UniProtKB-EC"/>
</dbReference>
<dbReference type="GO" id="GO:0006508">
    <property type="term" value="P:proteolysis"/>
    <property type="evidence" value="ECO:0007669"/>
    <property type="project" value="UniProtKB-KW"/>
</dbReference>
<dbReference type="Gene3D" id="3.90.230.10">
    <property type="entry name" value="Creatinase/methionine aminopeptidase superfamily"/>
    <property type="match status" value="1"/>
</dbReference>
<dbReference type="Gene3D" id="3.40.350.10">
    <property type="entry name" value="Creatinase/prolidase N-terminal domain"/>
    <property type="match status" value="1"/>
</dbReference>
<dbReference type="HAMAP" id="MF_01279">
    <property type="entry name" value="X_Pro_dipeptid"/>
    <property type="match status" value="1"/>
</dbReference>
<dbReference type="InterPro" id="IPR029149">
    <property type="entry name" value="Creatin/AminoP/Spt16_N"/>
</dbReference>
<dbReference type="InterPro" id="IPR036005">
    <property type="entry name" value="Creatinase/aminopeptidase-like"/>
</dbReference>
<dbReference type="InterPro" id="IPR048819">
    <property type="entry name" value="PepQ_N"/>
</dbReference>
<dbReference type="InterPro" id="IPR000994">
    <property type="entry name" value="Pept_M24"/>
</dbReference>
<dbReference type="InterPro" id="IPR001131">
    <property type="entry name" value="Peptidase_M24B_aminopep-P_CS"/>
</dbReference>
<dbReference type="InterPro" id="IPR052433">
    <property type="entry name" value="X-Pro_dipept-like"/>
</dbReference>
<dbReference type="InterPro" id="IPR022846">
    <property type="entry name" value="X_Pro_dipept"/>
</dbReference>
<dbReference type="NCBIfam" id="NF010133">
    <property type="entry name" value="PRK13607.1"/>
    <property type="match status" value="1"/>
</dbReference>
<dbReference type="PANTHER" id="PTHR43226">
    <property type="entry name" value="XAA-PRO AMINOPEPTIDASE 3"/>
    <property type="match status" value="1"/>
</dbReference>
<dbReference type="PANTHER" id="PTHR43226:SF8">
    <property type="entry name" value="XAA-PRO DIPEPTIDASE"/>
    <property type="match status" value="1"/>
</dbReference>
<dbReference type="Pfam" id="PF21216">
    <property type="entry name" value="PepQ_N"/>
    <property type="match status" value="1"/>
</dbReference>
<dbReference type="Pfam" id="PF00557">
    <property type="entry name" value="Peptidase_M24"/>
    <property type="match status" value="1"/>
</dbReference>
<dbReference type="SUPFAM" id="SSF55920">
    <property type="entry name" value="Creatinase/aminopeptidase"/>
    <property type="match status" value="1"/>
</dbReference>
<dbReference type="PROSITE" id="PS00491">
    <property type="entry name" value="PROLINE_PEPTIDASE"/>
    <property type="match status" value="1"/>
</dbReference>
<proteinExistence type="inferred from homology"/>
<name>PEPQ_YERPN</name>
<evidence type="ECO:0000255" key="1">
    <source>
        <dbReference type="HAMAP-Rule" id="MF_01279"/>
    </source>
</evidence>
<organism>
    <name type="scientific">Yersinia pestis bv. Antiqua (strain Nepal516)</name>
    <dbReference type="NCBI Taxonomy" id="377628"/>
    <lineage>
        <taxon>Bacteria</taxon>
        <taxon>Pseudomonadati</taxon>
        <taxon>Pseudomonadota</taxon>
        <taxon>Gammaproteobacteria</taxon>
        <taxon>Enterobacterales</taxon>
        <taxon>Yersiniaceae</taxon>
        <taxon>Yersinia</taxon>
    </lineage>
</organism>
<accession>Q1CN98</accession>
<accession>D1Q192</accession>
<gene>
    <name evidence="1" type="primary">pepQ</name>
    <name type="ordered locus">YPN_0199</name>
    <name type="ORF">YP516_0165</name>
</gene>
<sequence length="443" mass="50912">METLASLYNEHLSTLQQRTRDVLERHQLDALLIHSGELQRLFLDDRDYPFKVNPQFKAWVPVTEVPNCWLWVDGVNTPKLWFYSPVDYWHSVEPLPDSFWTKNIDVQPLLNADDIAQQLPVQRERVAYIGYAQQRAQALGFSAENINPQPVLDYLHYYRSYKTDYELACMREAQKTAVVGHRAAYEAFQSGMSEFDINLAYLMATGHRDTDVPYDNIVALNEHSAVLHYTILQHQPPAEIRSFLIDAGAEYNGYAADLTRTYTADRDSDFAALISDLNTEQLALIDTIKSGERYTDYHVQMHQRIAKLLRTHNLVTGISEEAMVEQGITCPFLPHGLGHPLGLQVHDTAGFMQDDKGTNLNAPSKYPYLRCTRVLQPRMVLTIEPGLYFIDSLLAPWRIGEFSKHFNWDRIDALKPYGGIRIEDNIVIHDKRVENMTRDLKLA</sequence>
<protein>
    <recommendedName>
        <fullName evidence="1">Xaa-Pro dipeptidase</fullName>
        <shortName evidence="1">X-Pro dipeptidase</shortName>
        <ecNumber evidence="1">3.4.13.9</ecNumber>
    </recommendedName>
    <alternativeName>
        <fullName evidence="1">Imidodipeptidase</fullName>
    </alternativeName>
    <alternativeName>
        <fullName evidence="1">Proline dipeptidase</fullName>
        <shortName evidence="1">Prolidase</shortName>
    </alternativeName>
</protein>